<accession>P00250</accession>
<feature type="initiator methionine" description="Removed" evidence="3">
    <location>
        <position position="1"/>
    </location>
</feature>
<feature type="chain" id="PRO_0000189306" description="Ferredoxin-1">
    <location>
        <begin position="2"/>
        <end position="97"/>
    </location>
</feature>
<feature type="domain" description="2Fe-2S ferredoxin-type" evidence="1">
    <location>
        <begin position="4"/>
        <end position="94"/>
    </location>
</feature>
<feature type="binding site" evidence="1 2">
    <location>
        <position position="40"/>
    </location>
    <ligand>
        <name>[2Fe-2S] cluster</name>
        <dbReference type="ChEBI" id="CHEBI:190135"/>
    </ligand>
</feature>
<feature type="binding site" evidence="1 2">
    <location>
        <position position="45"/>
    </location>
    <ligand>
        <name>[2Fe-2S] cluster</name>
        <dbReference type="ChEBI" id="CHEBI:190135"/>
    </ligand>
</feature>
<feature type="binding site" evidence="1 2">
    <location>
        <position position="48"/>
    </location>
    <ligand>
        <name>[2Fe-2S] cluster</name>
        <dbReference type="ChEBI" id="CHEBI:190135"/>
    </ligand>
</feature>
<feature type="binding site" evidence="1 2">
    <location>
        <position position="78"/>
    </location>
    <ligand>
        <name>[2Fe-2S] cluster</name>
        <dbReference type="ChEBI" id="CHEBI:190135"/>
    </ligand>
</feature>
<feature type="strand" evidence="6">
    <location>
        <begin position="3"/>
        <end position="9"/>
    </location>
</feature>
<feature type="strand" evidence="6">
    <location>
        <begin position="14"/>
        <end position="20"/>
    </location>
</feature>
<feature type="helix" evidence="6">
    <location>
        <begin position="25"/>
        <end position="31"/>
    </location>
</feature>
<feature type="strand" evidence="6">
    <location>
        <begin position="42"/>
        <end position="46"/>
    </location>
</feature>
<feature type="strand" evidence="6">
    <location>
        <begin position="49"/>
        <end position="56"/>
    </location>
</feature>
<feature type="strand" evidence="5">
    <location>
        <begin position="61"/>
        <end position="63"/>
    </location>
</feature>
<feature type="helix" evidence="6">
    <location>
        <begin position="67"/>
        <end position="71"/>
    </location>
</feature>
<feature type="strand" evidence="6">
    <location>
        <begin position="74"/>
        <end position="76"/>
    </location>
</feature>
<feature type="helix" evidence="6">
    <location>
        <begin position="77"/>
        <end position="79"/>
    </location>
</feature>
<feature type="strand" evidence="6">
    <location>
        <begin position="84"/>
        <end position="89"/>
    </location>
</feature>
<feature type="helix" evidence="6">
    <location>
        <begin position="93"/>
        <end position="96"/>
    </location>
</feature>
<evidence type="ECO:0000255" key="1">
    <source>
        <dbReference type="PROSITE-ProRule" id="PRU00465"/>
    </source>
</evidence>
<evidence type="ECO:0000269" key="2">
    <source>
    </source>
</evidence>
<evidence type="ECO:0000269" key="3">
    <source>
    </source>
</evidence>
<evidence type="ECO:0000305" key="4"/>
<evidence type="ECO:0007829" key="5">
    <source>
        <dbReference type="PDB" id="1FXI"/>
    </source>
</evidence>
<evidence type="ECO:0007829" key="6">
    <source>
        <dbReference type="PDB" id="3AV8"/>
    </source>
</evidence>
<protein>
    <recommendedName>
        <fullName>Ferredoxin-1</fullName>
    </recommendedName>
    <alternativeName>
        <fullName>Ferredoxin I</fullName>
    </alternativeName>
</protein>
<proteinExistence type="evidence at protein level"/>
<name>FER_APHSA</name>
<sequence>MASYKVTLKTPDGDNVITVPDDEYILDVAEEEGLDLPYSCRAGACSTCAGKLVSGPAPDEDQSFLDDDQIQAGYILTCVAYPTGDCVIETHKEEALY</sequence>
<organism>
    <name type="scientific">Aphanothece sacrum</name>
    <dbReference type="NCBI Taxonomy" id="1122"/>
    <lineage>
        <taxon>Bacteria</taxon>
        <taxon>Bacillati</taxon>
        <taxon>Cyanobacteriota</taxon>
        <taxon>Cyanophyceae</taxon>
        <taxon>Oscillatoriophycideae</taxon>
        <taxon>Chroococcales</taxon>
        <taxon>Aphanothecaceae</taxon>
        <taxon>Aphanothece</taxon>
    </lineage>
</organism>
<keyword id="KW-0001">2Fe-2S</keyword>
<keyword id="KW-0002">3D-structure</keyword>
<keyword id="KW-0903">Direct protein sequencing</keyword>
<keyword id="KW-0249">Electron transport</keyword>
<keyword id="KW-0408">Iron</keyword>
<keyword id="KW-0411">Iron-sulfur</keyword>
<keyword id="KW-0479">Metal-binding</keyword>
<keyword id="KW-0813">Transport</keyword>
<reference key="1">
    <citation type="journal article" date="1976" name="J. Biochem.">
        <title>Amino acid sequence of the major component of Aphanothece sacrum ferredoxin.</title>
        <authorList>
            <person name="Hase T."/>
            <person name="Wada K."/>
            <person name="Matsubara H."/>
        </authorList>
    </citation>
    <scope>PROTEIN SEQUENCE OF 2-97</scope>
</reference>
<reference key="2">
    <citation type="journal article" date="1990" name="J. Mol. Biol.">
        <title>Structure of the [2Fe-2S] ferredoxin I from the blue-green alga Aphanothece sacrum at 2.2-A resolution.</title>
        <authorList>
            <person name="Tsukihara T."/>
            <person name="Fukuyama K."/>
            <person name="Mizushima M."/>
            <person name="Harioka T."/>
            <person name="Kusunoki M."/>
            <person name="Katsube Y."/>
            <person name="Hase T."/>
            <person name="Matsubara H."/>
        </authorList>
    </citation>
    <scope>X-RAY CRYSTALLOGRAPHY (2.2 ANGSTROMS)</scope>
</reference>
<dbReference type="PIR" id="A00254">
    <property type="entry name" value="FEAH"/>
</dbReference>
<dbReference type="PDB" id="1FXI">
    <property type="method" value="X-ray"/>
    <property type="resolution" value="2.20 A"/>
    <property type="chains" value="A/B/C/D=2-97"/>
</dbReference>
<dbReference type="PDB" id="3AV8">
    <property type="method" value="X-ray"/>
    <property type="resolution" value="1.46 A"/>
    <property type="chains" value="A/B/C/D=2-97"/>
</dbReference>
<dbReference type="PDBsum" id="1FXI"/>
<dbReference type="PDBsum" id="3AV8"/>
<dbReference type="SMR" id="P00250"/>
<dbReference type="EvolutionaryTrace" id="P00250"/>
<dbReference type="GO" id="GO:0051537">
    <property type="term" value="F:2 iron, 2 sulfur cluster binding"/>
    <property type="evidence" value="ECO:0007669"/>
    <property type="project" value="UniProtKB-KW"/>
</dbReference>
<dbReference type="GO" id="GO:0009055">
    <property type="term" value="F:electron transfer activity"/>
    <property type="evidence" value="ECO:0007669"/>
    <property type="project" value="InterPro"/>
</dbReference>
<dbReference type="GO" id="GO:0046872">
    <property type="term" value="F:metal ion binding"/>
    <property type="evidence" value="ECO:0007669"/>
    <property type="project" value="UniProtKB-KW"/>
</dbReference>
<dbReference type="GO" id="GO:0022900">
    <property type="term" value="P:electron transport chain"/>
    <property type="evidence" value="ECO:0007669"/>
    <property type="project" value="InterPro"/>
</dbReference>
<dbReference type="CDD" id="cd00207">
    <property type="entry name" value="fer2"/>
    <property type="match status" value="1"/>
</dbReference>
<dbReference type="FunFam" id="3.10.20.30:FF:000014">
    <property type="entry name" value="Ferredoxin"/>
    <property type="match status" value="1"/>
</dbReference>
<dbReference type="Gene3D" id="3.10.20.30">
    <property type="match status" value="1"/>
</dbReference>
<dbReference type="InterPro" id="IPR036010">
    <property type="entry name" value="2Fe-2S_ferredoxin-like_sf"/>
</dbReference>
<dbReference type="InterPro" id="IPR001041">
    <property type="entry name" value="2Fe-2S_ferredoxin-type"/>
</dbReference>
<dbReference type="InterPro" id="IPR006058">
    <property type="entry name" value="2Fe2S_fd_BS"/>
</dbReference>
<dbReference type="InterPro" id="IPR012675">
    <property type="entry name" value="Beta-grasp_dom_sf"/>
</dbReference>
<dbReference type="InterPro" id="IPR010241">
    <property type="entry name" value="Fd_pln"/>
</dbReference>
<dbReference type="NCBIfam" id="TIGR02008">
    <property type="entry name" value="fdx_plant"/>
    <property type="match status" value="1"/>
</dbReference>
<dbReference type="PANTHER" id="PTHR43112">
    <property type="entry name" value="FERREDOXIN"/>
    <property type="match status" value="1"/>
</dbReference>
<dbReference type="PANTHER" id="PTHR43112:SF3">
    <property type="entry name" value="FERREDOXIN-2, CHLOROPLASTIC"/>
    <property type="match status" value="1"/>
</dbReference>
<dbReference type="Pfam" id="PF00111">
    <property type="entry name" value="Fer2"/>
    <property type="match status" value="1"/>
</dbReference>
<dbReference type="SUPFAM" id="SSF54292">
    <property type="entry name" value="2Fe-2S ferredoxin-like"/>
    <property type="match status" value="1"/>
</dbReference>
<dbReference type="PROSITE" id="PS00197">
    <property type="entry name" value="2FE2S_FER_1"/>
    <property type="match status" value="1"/>
</dbReference>
<dbReference type="PROSITE" id="PS51085">
    <property type="entry name" value="2FE2S_FER_2"/>
    <property type="match status" value="1"/>
</dbReference>
<comment type="function">
    <text>Ferredoxins are iron-sulfur proteins that transfer electrons in a wide variety of metabolic reactions.</text>
</comment>
<comment type="cofactor">
    <cofactor>
        <name>[2Fe-2S] cluster</name>
        <dbReference type="ChEBI" id="CHEBI:190135"/>
    </cofactor>
    <text>Binds 1 [2Fe-2S] cluster.</text>
</comment>
<comment type="similarity">
    <text evidence="4">Belongs to the 2Fe2S plant-type ferredoxin family.</text>
</comment>